<comment type="function">
    <text evidence="4">Core component of nucleosome which plays a central role in DNA double strand break (DSB) repair. Nucleosomes wrap and compact DNA into chromatin, limiting DNA accessibility to the cellular machineries which require DNA as a template. Histones thereby play a central role in transcription regulation, DNA repair, DNA replication and chromosomal stability. DNA accessibility is regulated via a complex set of post-translational modifications of histones, also called histone code, and nucleosome remodeling.</text>
</comment>
<comment type="subunit">
    <text>The nucleosome is a histone octamer containing two molecules each of H2A, H2B, H3 and H4 assembled in one H3-H4 heterotetramer and two H2A-H2B heterodimers. The octamer wraps approximately 147 bp of DNA.</text>
</comment>
<comment type="subcellular location">
    <subcellularLocation>
        <location evidence="4">Nucleus</location>
    </subcellularLocation>
    <subcellularLocation>
        <location evidence="4">Chromosome</location>
    </subcellularLocation>
    <text>Localizes to both the large, transcriptionally active, somatic macronucleus (MAC) and the small, transcriptionally inert, germ line micronucleus (MIC).</text>
</comment>
<comment type="domain">
    <text>The [ST]-Q motif constitutes a recognition sequence for kinases from the PI3/PI4-kinase family.</text>
</comment>
<comment type="PTM">
    <text evidence="1">Monoubiquitination of Lys-124 gives a specific tag for epigenetic transcriptional repression.</text>
</comment>
<comment type="PTM">
    <text evidence="4">Phosphorylated to form H2AX134ph (gamma-H2AX) in response to DNA double-strand breaks (DSBs) generated by exogenous genotoxic agents in both the mitotic MIC and the amitotic MAC. Gamma-H2AX is also found when programmed DNA rearrangements occur, namely homologous recombination in the MIC during prophase of meiosis, and chromosome fragmentation and DNA elimination in developing MACs. Gamma-H2AX is important to recover from exogenous DNA damage and to repair breaks associated with normal micronuclear meiosis and mitosis and macronuclear amitotic division.</text>
</comment>
<comment type="PTM">
    <text evidence="3 5">Acetylation occurs almost exclusively in the MAC.</text>
</comment>
<comment type="similarity">
    <text evidence="6">Belongs to the histone H2A family.</text>
</comment>
<comment type="caution">
    <text evidence="6">To ensure consistency between histone entries, we follow the 'Brno' nomenclature for histone modifications, with positions referring to those used in the literature for the 'closest' model organism. Due to slight variations in histone sequences between organisms and to the presence of initiator methionine in UniProtKB/Swiss-Prot sequences, the actual positions of modified amino acids in the sequence generally differ. In this entry the following conventions are used: H2AK5ac = acetylated Lys-6; H2AK8ac = acetylated Lys-9; H2AK10ac = acetylated Lys-11; H2AK12ac = acetylated Lys-13; H2AK17ac = acetylated Lys-18; H2AS122ph = phosphorylated Ser-123; H2AK123ub1 = monoubiquitinated Lys-124; H2AS124ph = phosphorylated Ser-125; H2AS129ph = phosphorylated Ser-130; H2AS134ph = phosphorylated Ser-135.</text>
</comment>
<proteinExistence type="evidence at protein level"/>
<organism>
    <name type="scientific">Tetrahymena thermophila (strain SB210)</name>
    <dbReference type="NCBI Taxonomy" id="312017"/>
    <lineage>
        <taxon>Eukaryota</taxon>
        <taxon>Sar</taxon>
        <taxon>Alveolata</taxon>
        <taxon>Ciliophora</taxon>
        <taxon>Intramacronucleata</taxon>
        <taxon>Oligohymenophorea</taxon>
        <taxon>Hymenostomatida</taxon>
        <taxon>Tetrahymenina</taxon>
        <taxon>Tetrahymenidae</taxon>
        <taxon>Tetrahymena</taxon>
    </lineage>
</organism>
<dbReference type="EMBL" id="L18892">
    <property type="protein sequence ID" value="AAC37291.1"/>
    <property type="molecule type" value="Unassigned_DNA"/>
</dbReference>
<dbReference type="EMBL" id="GG662316">
    <property type="protein sequence ID" value="EAS05932.1"/>
    <property type="molecule type" value="Genomic_DNA"/>
</dbReference>
<dbReference type="PIR" id="S41471">
    <property type="entry name" value="S41471"/>
</dbReference>
<dbReference type="RefSeq" id="XP_001026177.1">
    <property type="nucleotide sequence ID" value="XM_001026177.3"/>
</dbReference>
<dbReference type="SMR" id="P35064"/>
<dbReference type="FunCoup" id="P35064">
    <property type="interactions" value="207"/>
</dbReference>
<dbReference type="STRING" id="312017.P35064"/>
<dbReference type="iPTMnet" id="P35064"/>
<dbReference type="EnsemblProtists" id="EAS05932">
    <property type="protein sequence ID" value="EAS05932"/>
    <property type="gene ID" value="TTHERM_00790790"/>
</dbReference>
<dbReference type="GeneID" id="7837147"/>
<dbReference type="KEGG" id="tet:TTHERM_00790790"/>
<dbReference type="eggNOG" id="KOG1756">
    <property type="taxonomic scope" value="Eukaryota"/>
</dbReference>
<dbReference type="HOGENOM" id="CLU_062828_3_1_1"/>
<dbReference type="InParanoid" id="P35064"/>
<dbReference type="OMA" id="YWARRTA"/>
<dbReference type="OrthoDB" id="308519at2759"/>
<dbReference type="Proteomes" id="UP000009168">
    <property type="component" value="Unassembled WGS sequence"/>
</dbReference>
<dbReference type="GO" id="GO:0000786">
    <property type="term" value="C:nucleosome"/>
    <property type="evidence" value="ECO:0007669"/>
    <property type="project" value="UniProtKB-KW"/>
</dbReference>
<dbReference type="GO" id="GO:0005634">
    <property type="term" value="C:nucleus"/>
    <property type="evidence" value="ECO:0007669"/>
    <property type="project" value="UniProtKB-SubCell"/>
</dbReference>
<dbReference type="GO" id="GO:0003677">
    <property type="term" value="F:DNA binding"/>
    <property type="evidence" value="ECO:0007669"/>
    <property type="project" value="UniProtKB-KW"/>
</dbReference>
<dbReference type="GO" id="GO:0046982">
    <property type="term" value="F:protein heterodimerization activity"/>
    <property type="evidence" value="ECO:0007669"/>
    <property type="project" value="InterPro"/>
</dbReference>
<dbReference type="GO" id="GO:0030527">
    <property type="term" value="F:structural constituent of chromatin"/>
    <property type="evidence" value="ECO:0007669"/>
    <property type="project" value="InterPro"/>
</dbReference>
<dbReference type="CDD" id="cd00074">
    <property type="entry name" value="HFD_H2A"/>
    <property type="match status" value="1"/>
</dbReference>
<dbReference type="FunFam" id="1.10.20.10:FF:000026">
    <property type="entry name" value="Histone H2A"/>
    <property type="match status" value="1"/>
</dbReference>
<dbReference type="Gene3D" id="1.10.20.10">
    <property type="entry name" value="Histone, subunit A"/>
    <property type="match status" value="1"/>
</dbReference>
<dbReference type="InterPro" id="IPR009072">
    <property type="entry name" value="Histone-fold"/>
</dbReference>
<dbReference type="InterPro" id="IPR002119">
    <property type="entry name" value="Histone_H2A"/>
</dbReference>
<dbReference type="InterPro" id="IPR007125">
    <property type="entry name" value="Histone_H2A/H2B/H3"/>
</dbReference>
<dbReference type="InterPro" id="IPR032454">
    <property type="entry name" value="Histone_H2A_C"/>
</dbReference>
<dbReference type="InterPro" id="IPR032458">
    <property type="entry name" value="Histone_H2A_CS"/>
</dbReference>
<dbReference type="PANTHER" id="PTHR23430">
    <property type="entry name" value="HISTONE H2A"/>
    <property type="match status" value="1"/>
</dbReference>
<dbReference type="Pfam" id="PF00125">
    <property type="entry name" value="Histone"/>
    <property type="match status" value="1"/>
</dbReference>
<dbReference type="Pfam" id="PF16211">
    <property type="entry name" value="Histone_H2A_C"/>
    <property type="match status" value="1"/>
</dbReference>
<dbReference type="PRINTS" id="PR00620">
    <property type="entry name" value="HISTONEH2A"/>
</dbReference>
<dbReference type="SMART" id="SM00414">
    <property type="entry name" value="H2A"/>
    <property type="match status" value="1"/>
</dbReference>
<dbReference type="SUPFAM" id="SSF47113">
    <property type="entry name" value="Histone-fold"/>
    <property type="match status" value="1"/>
</dbReference>
<dbReference type="PROSITE" id="PS00046">
    <property type="entry name" value="HISTONE_H2A"/>
    <property type="match status" value="1"/>
</dbReference>
<feature type="initiator methionine" description="Removed" evidence="1">
    <location>
        <position position="1"/>
    </location>
</feature>
<feature type="chain" id="PRO_0000055284" description="Histone H2AX">
    <location>
        <begin position="2"/>
        <end position="138"/>
    </location>
</feature>
<feature type="region of interest" description="Disordered" evidence="2">
    <location>
        <begin position="1"/>
        <end position="23"/>
    </location>
</feature>
<feature type="short sequence motif" description="[ST]-Q motif">
    <location>
        <begin position="135"/>
        <end position="136"/>
    </location>
</feature>
<feature type="modified residue" description="N-acetylserine" evidence="3">
    <location>
        <position position="2"/>
    </location>
</feature>
<feature type="modified residue" description="N6-acetyllysine" evidence="3">
    <location>
        <position position="6"/>
    </location>
</feature>
<feature type="modified residue" description="N6-acetyllysine" evidence="3">
    <location>
        <position position="9"/>
    </location>
</feature>
<feature type="modified residue" description="N6-acetyllysine" evidence="3">
    <location>
        <position position="11"/>
    </location>
</feature>
<feature type="modified residue" description="N6-acetyllysine" evidence="3">
    <location>
        <position position="13"/>
    </location>
</feature>
<feature type="modified residue" description="N6-acetyllysine" evidence="3">
    <location>
        <position position="18"/>
    </location>
</feature>
<feature type="modified residue" description="Phosphoserine" evidence="1">
    <location>
        <position position="123"/>
    </location>
</feature>
<feature type="modified residue" description="Phosphoserine" evidence="1">
    <location>
        <position position="125"/>
    </location>
</feature>
<feature type="modified residue" description="Phosphoserine" evidence="1">
    <location>
        <position position="130"/>
    </location>
</feature>
<feature type="modified residue" description="Phosphoserine" evidence="4">
    <location>
        <position position="135"/>
    </location>
</feature>
<feature type="cross-link" description="Glycyl lysine isopeptide (Lys-Gly) (interchain with G-Cter in ubiquitin)" evidence="7">
    <location>
        <position position="124"/>
    </location>
</feature>
<feature type="mutagenesis site" description="Causes DNA damage accumulation in both MACs and MICs and leads to meiotic and mitotic defects." evidence="4">
    <original>S</original>
    <variation>A</variation>
    <location>
        <position position="135"/>
    </location>
</feature>
<accession>P35064</accession>
<accession>Q24DQ8</accession>
<sequence>MSTTGKGGKAKGKTASSKQVSRSARAGLQFPVGRISRFLKHGRYSERVGTGAPVYLAAVLEYLAAEVLELAGNAAKDNKKTRIVPRHILLAIRNDEELNKLMANTTIADGGVLPNINPMLLPSKSKKTESRGQASQDL</sequence>
<protein>
    <recommendedName>
        <fullName>Histone H2AX</fullName>
    </recommendedName>
    <alternativeName>
        <fullName>Histone H2A.1</fullName>
        <shortName>H2A1</shortName>
    </alternativeName>
    <alternativeName>
        <fullName>Histone H2A.X</fullName>
    </alternativeName>
</protein>
<keyword id="KW-0007">Acetylation</keyword>
<keyword id="KW-0158">Chromosome</keyword>
<keyword id="KW-0238">DNA-binding</keyword>
<keyword id="KW-1017">Isopeptide bond</keyword>
<keyword id="KW-0544">Nucleosome core</keyword>
<keyword id="KW-0539">Nucleus</keyword>
<keyword id="KW-0597">Phosphoprotein</keyword>
<keyword id="KW-1185">Reference proteome</keyword>
<keyword id="KW-0832">Ubl conjugation</keyword>
<reference key="1">
    <citation type="journal article" date="1993" name="Nucleic Acids Res.">
        <title>Mapping the 5' and 3' ends of Tetrahymena thermophila mRNAs using RNA ligase mediated amplification of cDNA ends (RLM-RACE).</title>
        <authorList>
            <person name="Liu X."/>
            <person name="Gorovsky M.A."/>
        </authorList>
    </citation>
    <scope>NUCLEOTIDE SEQUENCE [MRNA]</scope>
    <source>
        <strain>CU428</strain>
    </source>
</reference>
<reference key="2">
    <citation type="journal article" date="1996" name="Nucleic Acids Res.">
        <title>Cloning and characterization of the major histone H2A genes completes the cloning and sequencing of known histone genes of Tetrahymena thermophila.</title>
        <authorList>
            <person name="Liu X."/>
            <person name="Gorovsky M.A."/>
        </authorList>
    </citation>
    <scope>NUCLEOTIDE SEQUENCE [GENOMIC DNA]</scope>
    <source>
        <strain>CU428</strain>
    </source>
</reference>
<reference key="3">
    <citation type="journal article" date="2006" name="PLoS Biol.">
        <title>Macronuclear genome sequence of the ciliate Tetrahymena thermophila, a model eukaryote.</title>
        <authorList>
            <person name="Eisen J.A."/>
            <person name="Coyne R.S."/>
            <person name="Wu M."/>
            <person name="Wu D."/>
            <person name="Thiagarajan M."/>
            <person name="Wortman J.R."/>
            <person name="Badger J.H."/>
            <person name="Ren Q."/>
            <person name="Amedeo P."/>
            <person name="Jones K.M."/>
            <person name="Tallon L.J."/>
            <person name="Delcher A.L."/>
            <person name="Salzberg S.L."/>
            <person name="Silva J.C."/>
            <person name="Haas B.J."/>
            <person name="Majoros W.H."/>
            <person name="Farzad M."/>
            <person name="Carlton J.M."/>
            <person name="Smith R.K. Jr."/>
            <person name="Garg J."/>
            <person name="Pearlman R.E."/>
            <person name="Karrer K.M."/>
            <person name="Sun L."/>
            <person name="Manning G."/>
            <person name="Elde N.C."/>
            <person name="Turkewitz A.P."/>
            <person name="Asai D.J."/>
            <person name="Wilkes D.E."/>
            <person name="Wang Y."/>
            <person name="Cai H."/>
            <person name="Collins K."/>
            <person name="Stewart B.A."/>
            <person name="Lee S.R."/>
            <person name="Wilamowska K."/>
            <person name="Weinberg Z."/>
            <person name="Ruzzo W.L."/>
            <person name="Wloga D."/>
            <person name="Gaertig J."/>
            <person name="Frankel J."/>
            <person name="Tsao C.-C."/>
            <person name="Gorovsky M.A."/>
            <person name="Keeling P.J."/>
            <person name="Waller R.F."/>
            <person name="Patron N.J."/>
            <person name="Cherry J.M."/>
            <person name="Stover N.A."/>
            <person name="Krieger C.J."/>
            <person name="del Toro C."/>
            <person name="Ryder H.F."/>
            <person name="Williamson S.C."/>
            <person name="Barbeau R.A."/>
            <person name="Hamilton E.P."/>
            <person name="Orias E."/>
        </authorList>
    </citation>
    <scope>NUCLEOTIDE SEQUENCE [LARGE SCALE GENOMIC DNA]</scope>
    <source>
        <strain>SB210</strain>
    </source>
</reference>
<reference key="4">
    <citation type="journal article" date="1982" name="J. Biol. Chem.">
        <title>Regulation of histone acetylation in Tetrahymena macro- and micronuclei.</title>
        <authorList>
            <person name="Vavra K.J."/>
            <person name="Allis C.D."/>
            <person name="Gorovsky M.A."/>
        </authorList>
    </citation>
    <scope>ACETYLATION</scope>
    <source>
        <strain>B</strain>
    </source>
</reference>
<reference key="5">
    <citation type="journal article" date="1989" name="Biochemistry">
        <title>Ubiquitinated histone H2B is preferentially located in transcriptionally active chromatin.</title>
        <authorList>
            <person name="Nickel B.E."/>
            <person name="Allis C.D."/>
            <person name="Davie J.R."/>
        </authorList>
    </citation>
    <scope>UBIQUITINATION</scope>
</reference>
<reference key="6">
    <citation type="journal article" date="2003" name="Mol. Cell. Biol.">
        <title>The nonessential H2A N-terminal tail can function as an essential charge patch on the H2A.Z variant N-terminal tail.</title>
        <authorList>
            <person name="Ren Q."/>
            <person name="Gorovsky M.A."/>
        </authorList>
    </citation>
    <scope>ACETYLATION AT SER-2; LYS-6; LYS-9; LYS-11; LYS-13 AND LYS-18</scope>
    <source>
        <strain>B2086</strain>
        <strain>CU427</strain>
        <strain>CU428</strain>
    </source>
</reference>
<reference key="7">
    <citation type="journal article" date="2007" name="Mol. Cell. Biol.">
        <title>Phosphorylation of the SQ H2A.X motif is required for proper meiosis and mitosis in Tetrahymena thermophila.</title>
        <authorList>
            <person name="Song X."/>
            <person name="Gjoneska E."/>
            <person name="Ren Q."/>
            <person name="Taverna S.D."/>
            <person name="Allis C.D."/>
            <person name="Gorovsky M.A."/>
        </authorList>
    </citation>
    <scope>FUNCTION</scope>
    <scope>SUBCELLULAR LOCATION</scope>
    <scope>PHOSPHORYLATION AT SER-135</scope>
    <scope>MUTAGENESIS OF SER-135</scope>
</reference>
<name>H2AX_TETTS</name>
<evidence type="ECO:0000250" key="1"/>
<evidence type="ECO:0000256" key="2">
    <source>
        <dbReference type="SAM" id="MobiDB-lite"/>
    </source>
</evidence>
<evidence type="ECO:0000269" key="3">
    <source>
    </source>
</evidence>
<evidence type="ECO:0000269" key="4">
    <source>
    </source>
</evidence>
<evidence type="ECO:0000269" key="5">
    <source>
    </source>
</evidence>
<evidence type="ECO:0000305" key="6"/>
<evidence type="ECO:0000305" key="7">
    <source>
    </source>
</evidence>
<gene>
    <name type="primary">HTA1</name>
    <name type="ORF">TTHERM_00790790</name>
</gene>